<reference key="1">
    <citation type="journal article" date="2007" name="PLoS ONE">
        <title>Molecular correlates of host specialization in Staphylococcus aureus.</title>
        <authorList>
            <person name="Herron-Olson L."/>
            <person name="Fitzgerald J.R."/>
            <person name="Musser J.M."/>
            <person name="Kapur V."/>
        </authorList>
    </citation>
    <scope>NUCLEOTIDE SEQUENCE [LARGE SCALE GENOMIC DNA]</scope>
    <source>
        <strain>bovine RF122 / ET3-1</strain>
    </source>
</reference>
<sequence>MEFSQKLYQAAKPIINDIYEDDFIQKMLLGNIQADALRHYLQADAAYLKEFTNLYALLIPKMNSMNDVKFLVEQIEFMVEGEVLAHDILAQIVGESYEEIINTKFWPPSGDHYIKHMYFQAHSRENAIYTIAAMAPCPYIYAELAKRSQSDHKLNREKDTAKWFDFYSTEMDDIINVFEALMNKLAESMSDKELEQVKQVFLESCIHERRFFNMAMTLEQWEFGGKVND</sequence>
<evidence type="ECO:0000250" key="1">
    <source>
        <dbReference type="UniProtKB" id="P25052"/>
    </source>
</evidence>
<evidence type="ECO:0000250" key="2">
    <source>
        <dbReference type="UniProtKB" id="Q6GEY1"/>
    </source>
</evidence>
<evidence type="ECO:0000305" key="3"/>
<proteinExistence type="inferred from homology"/>
<protein>
    <recommendedName>
        <fullName evidence="1">Aminopyrimidine aminohydrolase</fullName>
        <ecNumber evidence="2">3.5.99.2</ecNumber>
    </recommendedName>
    <alternativeName>
        <fullName evidence="2">Thiaminase II</fullName>
    </alternativeName>
</protein>
<keyword id="KW-0378">Hydrolase</keyword>
<keyword id="KW-0784">Thiamine biosynthesis</keyword>
<accession>Q2YUL0</accession>
<organism>
    <name type="scientific">Staphylococcus aureus (strain bovine RF122 / ET3-1)</name>
    <dbReference type="NCBI Taxonomy" id="273036"/>
    <lineage>
        <taxon>Bacteria</taxon>
        <taxon>Bacillati</taxon>
        <taxon>Bacillota</taxon>
        <taxon>Bacilli</taxon>
        <taxon>Bacillales</taxon>
        <taxon>Staphylococcaceae</taxon>
        <taxon>Staphylococcus</taxon>
    </lineage>
</organism>
<name>TENA_STAAB</name>
<comment type="function">
    <text evidence="1 2">Catalyzes an amino-pyrimidine hydrolysis reaction at the C5' of the pyrimidine moiety of thiamine compounds, a reaction that is part of a thiamine salvage pathway. Thus, catalyzes the conversion of 4-amino-5-aminomethyl-2-methylpyrimidine to 4-amino-5-hydroxymethyl-2-methylpyrimidine (HMP). Is also able to catalyze the hydrolytic cleavage of thiamine; however, this thiaminase activity may not be physiologically relevant. Therefore, is probably involved in the regeneration of the thiamine pyrimidine from thiamine degraded products present in the environment, rather than in thiamine degradation.</text>
</comment>
<comment type="catalytic activity">
    <reaction evidence="1">
        <text>4-amino-5-aminomethyl-2-methylpyrimidine + H2O = 4-amino-5-hydroxymethyl-2-methylpyrimidine + NH4(+)</text>
        <dbReference type="Rhea" id="RHEA:31799"/>
        <dbReference type="ChEBI" id="CHEBI:15377"/>
        <dbReference type="ChEBI" id="CHEBI:16892"/>
        <dbReference type="ChEBI" id="CHEBI:28938"/>
        <dbReference type="ChEBI" id="CHEBI:63416"/>
        <dbReference type="EC" id="3.5.99.2"/>
    </reaction>
</comment>
<comment type="catalytic activity">
    <reaction evidence="2">
        <text>thiamine + H2O = 5-(2-hydroxyethyl)-4-methylthiazole + 4-amino-5-hydroxymethyl-2-methylpyrimidine + H(+)</text>
        <dbReference type="Rhea" id="RHEA:17509"/>
        <dbReference type="ChEBI" id="CHEBI:15377"/>
        <dbReference type="ChEBI" id="CHEBI:15378"/>
        <dbReference type="ChEBI" id="CHEBI:16892"/>
        <dbReference type="ChEBI" id="CHEBI:17957"/>
        <dbReference type="ChEBI" id="CHEBI:18385"/>
        <dbReference type="EC" id="3.5.99.2"/>
    </reaction>
</comment>
<comment type="pathway">
    <text evidence="1">Cofactor biosynthesis; thiamine diphosphate biosynthesis.</text>
</comment>
<comment type="subunit">
    <text evidence="2">Homotetramer.</text>
</comment>
<comment type="similarity">
    <text evidence="3">Belongs to the TenA family.</text>
</comment>
<dbReference type="EC" id="3.5.99.2" evidence="2"/>
<dbReference type="EMBL" id="AJ938182">
    <property type="protein sequence ID" value="CAI81667.1"/>
    <property type="molecule type" value="Genomic_DNA"/>
</dbReference>
<dbReference type="RefSeq" id="WP_000396070.1">
    <property type="nucleotide sequence ID" value="NC_007622.1"/>
</dbReference>
<dbReference type="SMR" id="Q2YUL0"/>
<dbReference type="KEGG" id="sab:SAB1978c"/>
<dbReference type="HOGENOM" id="CLU_077537_3_1_9"/>
<dbReference type="UniPathway" id="UPA00060"/>
<dbReference type="GO" id="GO:0005829">
    <property type="term" value="C:cytosol"/>
    <property type="evidence" value="ECO:0007669"/>
    <property type="project" value="TreeGrafter"/>
</dbReference>
<dbReference type="GO" id="GO:0050334">
    <property type="term" value="F:thiaminase activity"/>
    <property type="evidence" value="ECO:0007669"/>
    <property type="project" value="UniProtKB-EC"/>
</dbReference>
<dbReference type="GO" id="GO:0009228">
    <property type="term" value="P:thiamine biosynthetic process"/>
    <property type="evidence" value="ECO:0007669"/>
    <property type="project" value="UniProtKB-KW"/>
</dbReference>
<dbReference type="GO" id="GO:0009229">
    <property type="term" value="P:thiamine diphosphate biosynthetic process"/>
    <property type="evidence" value="ECO:0007669"/>
    <property type="project" value="UniProtKB-UniPathway"/>
</dbReference>
<dbReference type="CDD" id="cd19360">
    <property type="entry name" value="TenA_C_SaTenA-like"/>
    <property type="match status" value="1"/>
</dbReference>
<dbReference type="Gene3D" id="1.20.910.10">
    <property type="entry name" value="Heme oxygenase-like"/>
    <property type="match status" value="1"/>
</dbReference>
<dbReference type="InterPro" id="IPR016084">
    <property type="entry name" value="Haem_Oase-like_multi-hlx"/>
</dbReference>
<dbReference type="InterPro" id="IPR004305">
    <property type="entry name" value="Thiaminase-2/PQQC"/>
</dbReference>
<dbReference type="InterPro" id="IPR027574">
    <property type="entry name" value="Thiaminase_II"/>
</dbReference>
<dbReference type="InterPro" id="IPR050967">
    <property type="entry name" value="Thiamine_Salvage_TenA"/>
</dbReference>
<dbReference type="NCBIfam" id="TIGR04306">
    <property type="entry name" value="salvage_TenA"/>
    <property type="match status" value="1"/>
</dbReference>
<dbReference type="PANTHER" id="PTHR43198">
    <property type="entry name" value="BIFUNCTIONAL TH2 PROTEIN"/>
    <property type="match status" value="1"/>
</dbReference>
<dbReference type="PANTHER" id="PTHR43198:SF2">
    <property type="entry name" value="SI:CH1073-67J19.1-RELATED"/>
    <property type="match status" value="1"/>
</dbReference>
<dbReference type="Pfam" id="PF03070">
    <property type="entry name" value="TENA_THI-4"/>
    <property type="match status" value="1"/>
</dbReference>
<dbReference type="SUPFAM" id="SSF48613">
    <property type="entry name" value="Heme oxygenase-like"/>
    <property type="match status" value="1"/>
</dbReference>
<feature type="chain" id="PRO_0000293605" description="Aminopyrimidine aminohydrolase">
    <location>
        <begin position="1"/>
        <end position="229"/>
    </location>
</feature>
<feature type="active site" description="Nucleophile" evidence="1">
    <location>
        <position position="137"/>
    </location>
</feature>
<feature type="active site" description="Proton donor" evidence="1">
    <location>
        <position position="208"/>
    </location>
</feature>
<feature type="binding site" evidence="1">
    <location>
        <position position="44"/>
    </location>
    <ligand>
        <name>substrate</name>
    </ligand>
</feature>
<feature type="binding site" evidence="1">
    <location>
        <position position="141"/>
    </location>
    <ligand>
        <name>substrate</name>
    </ligand>
</feature>
<feature type="binding site" evidence="1">
    <location>
        <position position="167"/>
    </location>
    <ligand>
        <name>substrate</name>
    </ligand>
</feature>
<feature type="site" description="Increases nucleophilicity of active site Cys" evidence="1">
    <location>
        <position position="47"/>
    </location>
</feature>
<gene>
    <name type="primary">tenA</name>
    <name type="ordered locus">SAB1978c</name>
</gene>